<name>RS14Z_DEHM1</name>
<protein>
    <recommendedName>
        <fullName evidence="1">Small ribosomal subunit protein uS14</fullName>
    </recommendedName>
    <alternativeName>
        <fullName evidence="2">30S ribosomal protein S14 type Z</fullName>
    </alternativeName>
</protein>
<dbReference type="EMBL" id="CP000027">
    <property type="protein sequence ID" value="AAW40615.1"/>
    <property type="molecule type" value="Genomic_DNA"/>
</dbReference>
<dbReference type="RefSeq" id="WP_010936264.1">
    <property type="nucleotide sequence ID" value="NC_002936.3"/>
</dbReference>
<dbReference type="SMR" id="Q3Z968"/>
<dbReference type="FunCoup" id="Q3Z968">
    <property type="interactions" value="102"/>
</dbReference>
<dbReference type="STRING" id="243164.DET0487"/>
<dbReference type="GeneID" id="35810850"/>
<dbReference type="KEGG" id="det:DET0487"/>
<dbReference type="eggNOG" id="COG0199">
    <property type="taxonomic scope" value="Bacteria"/>
</dbReference>
<dbReference type="HOGENOM" id="CLU_139869_3_0_0"/>
<dbReference type="InParanoid" id="Q3Z968"/>
<dbReference type="Proteomes" id="UP000008289">
    <property type="component" value="Chromosome"/>
</dbReference>
<dbReference type="GO" id="GO:0005737">
    <property type="term" value="C:cytoplasm"/>
    <property type="evidence" value="ECO:0007669"/>
    <property type="project" value="UniProtKB-ARBA"/>
</dbReference>
<dbReference type="GO" id="GO:0015935">
    <property type="term" value="C:small ribosomal subunit"/>
    <property type="evidence" value="ECO:0007669"/>
    <property type="project" value="TreeGrafter"/>
</dbReference>
<dbReference type="GO" id="GO:0019843">
    <property type="term" value="F:rRNA binding"/>
    <property type="evidence" value="ECO:0007669"/>
    <property type="project" value="UniProtKB-UniRule"/>
</dbReference>
<dbReference type="GO" id="GO:0003735">
    <property type="term" value="F:structural constituent of ribosome"/>
    <property type="evidence" value="ECO:0007669"/>
    <property type="project" value="InterPro"/>
</dbReference>
<dbReference type="GO" id="GO:0008270">
    <property type="term" value="F:zinc ion binding"/>
    <property type="evidence" value="ECO:0007669"/>
    <property type="project" value="UniProtKB-UniRule"/>
</dbReference>
<dbReference type="GO" id="GO:0006412">
    <property type="term" value="P:translation"/>
    <property type="evidence" value="ECO:0007669"/>
    <property type="project" value="UniProtKB-UniRule"/>
</dbReference>
<dbReference type="FunFam" id="4.10.830.10:FF:000001">
    <property type="entry name" value="30S ribosomal protein S14 type Z"/>
    <property type="match status" value="1"/>
</dbReference>
<dbReference type="Gene3D" id="4.10.830.10">
    <property type="entry name" value="30s Ribosomal Protein S14, Chain N"/>
    <property type="match status" value="1"/>
</dbReference>
<dbReference type="HAMAP" id="MF_01364_B">
    <property type="entry name" value="Ribosomal_uS14_2_B"/>
    <property type="match status" value="1"/>
</dbReference>
<dbReference type="InterPro" id="IPR001209">
    <property type="entry name" value="Ribosomal_uS14"/>
</dbReference>
<dbReference type="InterPro" id="IPR023053">
    <property type="entry name" value="Ribosomal_uS14_bact"/>
</dbReference>
<dbReference type="InterPro" id="IPR018271">
    <property type="entry name" value="Ribosomal_uS14_CS"/>
</dbReference>
<dbReference type="InterPro" id="IPR043140">
    <property type="entry name" value="Ribosomal_uS14_sf"/>
</dbReference>
<dbReference type="NCBIfam" id="NF005974">
    <property type="entry name" value="PRK08061.1"/>
    <property type="match status" value="1"/>
</dbReference>
<dbReference type="PANTHER" id="PTHR19836">
    <property type="entry name" value="30S RIBOSOMAL PROTEIN S14"/>
    <property type="match status" value="1"/>
</dbReference>
<dbReference type="PANTHER" id="PTHR19836:SF19">
    <property type="entry name" value="SMALL RIBOSOMAL SUBUNIT PROTEIN US14M"/>
    <property type="match status" value="1"/>
</dbReference>
<dbReference type="Pfam" id="PF00253">
    <property type="entry name" value="Ribosomal_S14"/>
    <property type="match status" value="1"/>
</dbReference>
<dbReference type="SUPFAM" id="SSF57716">
    <property type="entry name" value="Glucocorticoid receptor-like (DNA-binding domain)"/>
    <property type="match status" value="1"/>
</dbReference>
<dbReference type="PROSITE" id="PS00527">
    <property type="entry name" value="RIBOSOMAL_S14"/>
    <property type="match status" value="1"/>
</dbReference>
<comment type="function">
    <text evidence="1">Binds 16S rRNA, required for the assembly of 30S particles and may also be responsible for determining the conformation of the 16S rRNA at the A site.</text>
</comment>
<comment type="cofactor">
    <cofactor evidence="1">
        <name>Zn(2+)</name>
        <dbReference type="ChEBI" id="CHEBI:29105"/>
    </cofactor>
    <text evidence="1">Binds 1 zinc ion per subunit.</text>
</comment>
<comment type="subunit">
    <text evidence="1">Part of the 30S ribosomal subunit. Contacts proteins S3 and S10.</text>
</comment>
<comment type="similarity">
    <text evidence="1">Belongs to the universal ribosomal protein uS14 family. Zinc-binding uS14 subfamily.</text>
</comment>
<keyword id="KW-0479">Metal-binding</keyword>
<keyword id="KW-0687">Ribonucleoprotein</keyword>
<keyword id="KW-0689">Ribosomal protein</keyword>
<keyword id="KW-0694">RNA-binding</keyword>
<keyword id="KW-0699">rRNA-binding</keyword>
<keyword id="KW-0862">Zinc</keyword>
<proteinExistence type="inferred from homology"/>
<evidence type="ECO:0000255" key="1">
    <source>
        <dbReference type="HAMAP-Rule" id="MF_01364"/>
    </source>
</evidence>
<evidence type="ECO:0000305" key="2"/>
<gene>
    <name evidence="1" type="primary">rpsZ</name>
    <name evidence="1" type="synonym">rpsN</name>
    <name type="ordered locus">DET0487</name>
</gene>
<reference key="1">
    <citation type="journal article" date="2005" name="Science">
        <title>Genome sequence of the PCE-dechlorinating bacterium Dehalococcoides ethenogenes.</title>
        <authorList>
            <person name="Seshadri R."/>
            <person name="Adrian L."/>
            <person name="Fouts D.E."/>
            <person name="Eisen J.A."/>
            <person name="Phillippy A.M."/>
            <person name="Methe B.A."/>
            <person name="Ward N.L."/>
            <person name="Nelson W.C."/>
            <person name="DeBoy R.T."/>
            <person name="Khouri H.M."/>
            <person name="Kolonay J.F."/>
            <person name="Dodson R.J."/>
            <person name="Daugherty S.C."/>
            <person name="Brinkac L.M."/>
            <person name="Sullivan S.A."/>
            <person name="Madupu R."/>
            <person name="Nelson K.E."/>
            <person name="Kang K.H."/>
            <person name="Impraim M."/>
            <person name="Tran K."/>
            <person name="Robinson J.M."/>
            <person name="Forberger H.A."/>
            <person name="Fraser C.M."/>
            <person name="Zinder S.H."/>
            <person name="Heidelberg J.F."/>
        </authorList>
    </citation>
    <scope>NUCLEOTIDE SEQUENCE [LARGE SCALE GENOMIC DNA]</scope>
    <source>
        <strain>ATCC BAA-2266 / KCTC 15142 / 195</strain>
    </source>
</reference>
<sequence>MAKTSKIVQSQRASKFKVQHHNRCSRCGRPRGYINRFGLCRICFRELALQGQIPGVRKSSW</sequence>
<organism>
    <name type="scientific">Dehalococcoides mccartyi (strain ATCC BAA-2266 / KCTC 15142 / 195)</name>
    <name type="common">Dehalococcoides ethenogenes (strain 195)</name>
    <dbReference type="NCBI Taxonomy" id="243164"/>
    <lineage>
        <taxon>Bacteria</taxon>
        <taxon>Bacillati</taxon>
        <taxon>Chloroflexota</taxon>
        <taxon>Dehalococcoidia</taxon>
        <taxon>Dehalococcoidales</taxon>
        <taxon>Dehalococcoidaceae</taxon>
        <taxon>Dehalococcoides</taxon>
    </lineage>
</organism>
<accession>Q3Z968</accession>
<feature type="chain" id="PRO_0000269093" description="Small ribosomal subunit protein uS14">
    <location>
        <begin position="1"/>
        <end position="61"/>
    </location>
</feature>
<feature type="binding site" evidence="1">
    <location>
        <position position="24"/>
    </location>
    <ligand>
        <name>Zn(2+)</name>
        <dbReference type="ChEBI" id="CHEBI:29105"/>
    </ligand>
</feature>
<feature type="binding site" evidence="1">
    <location>
        <position position="27"/>
    </location>
    <ligand>
        <name>Zn(2+)</name>
        <dbReference type="ChEBI" id="CHEBI:29105"/>
    </ligand>
</feature>
<feature type="binding site" evidence="1">
    <location>
        <position position="40"/>
    </location>
    <ligand>
        <name>Zn(2+)</name>
        <dbReference type="ChEBI" id="CHEBI:29105"/>
    </ligand>
</feature>
<feature type="binding site" evidence="1">
    <location>
        <position position="43"/>
    </location>
    <ligand>
        <name>Zn(2+)</name>
        <dbReference type="ChEBI" id="CHEBI:29105"/>
    </ligand>
</feature>